<reference key="1">
    <citation type="journal article" date="2013" name="Plant Physiol.">
        <title>A Nostoc punctiforme Sugar Transporter Necessary to Establish a Cyanobacterium-Plant Symbiosis.</title>
        <authorList>
            <person name="Ekman M."/>
            <person name="Picossi S."/>
            <person name="Campbell E.L."/>
            <person name="Meeks J.C."/>
            <person name="Flores E."/>
        </authorList>
    </citation>
    <scope>NUCLEOTIDE SEQUENCE [LARGE SCALE GENOMIC DNA]</scope>
    <source>
        <strain>ATCC 29133 / PCC 73102</strain>
    </source>
</reference>
<feature type="chain" id="PRO_1000138983" description="FMN-dependent NADH:quinone oxidoreductase">
    <location>
        <begin position="1"/>
        <end position="205"/>
    </location>
</feature>
<feature type="binding site" evidence="1">
    <location>
        <position position="10"/>
    </location>
    <ligand>
        <name>FMN</name>
        <dbReference type="ChEBI" id="CHEBI:58210"/>
    </ligand>
</feature>
<feature type="binding site" evidence="1">
    <location>
        <begin position="16"/>
        <end position="18"/>
    </location>
    <ligand>
        <name>FMN</name>
        <dbReference type="ChEBI" id="CHEBI:58210"/>
    </ligand>
</feature>
<feature type="binding site" evidence="1">
    <location>
        <begin position="96"/>
        <end position="99"/>
    </location>
    <ligand>
        <name>FMN</name>
        <dbReference type="ChEBI" id="CHEBI:58210"/>
    </ligand>
</feature>
<comment type="function">
    <text evidence="1">Quinone reductase that provides resistance to thiol-specific stress caused by electrophilic quinones.</text>
</comment>
<comment type="function">
    <text evidence="1">Also exhibits azoreductase activity. Catalyzes the reductive cleavage of the azo bond in aromatic azo compounds to the corresponding amines.</text>
</comment>
<comment type="catalytic activity">
    <reaction evidence="1">
        <text>2 a quinone + NADH + H(+) = 2 a 1,4-benzosemiquinone + NAD(+)</text>
        <dbReference type="Rhea" id="RHEA:65952"/>
        <dbReference type="ChEBI" id="CHEBI:15378"/>
        <dbReference type="ChEBI" id="CHEBI:57540"/>
        <dbReference type="ChEBI" id="CHEBI:57945"/>
        <dbReference type="ChEBI" id="CHEBI:132124"/>
        <dbReference type="ChEBI" id="CHEBI:134225"/>
    </reaction>
</comment>
<comment type="catalytic activity">
    <reaction evidence="1">
        <text>N,N-dimethyl-1,4-phenylenediamine + anthranilate + 2 NAD(+) = 2-(4-dimethylaminophenyl)diazenylbenzoate + 2 NADH + 2 H(+)</text>
        <dbReference type="Rhea" id="RHEA:55872"/>
        <dbReference type="ChEBI" id="CHEBI:15378"/>
        <dbReference type="ChEBI" id="CHEBI:15783"/>
        <dbReference type="ChEBI" id="CHEBI:16567"/>
        <dbReference type="ChEBI" id="CHEBI:57540"/>
        <dbReference type="ChEBI" id="CHEBI:57945"/>
        <dbReference type="ChEBI" id="CHEBI:71579"/>
        <dbReference type="EC" id="1.7.1.17"/>
    </reaction>
</comment>
<comment type="cofactor">
    <cofactor evidence="1">
        <name>FMN</name>
        <dbReference type="ChEBI" id="CHEBI:58210"/>
    </cofactor>
    <text evidence="1">Binds 1 FMN per subunit.</text>
</comment>
<comment type="subunit">
    <text evidence="1">Homodimer.</text>
</comment>
<comment type="similarity">
    <text evidence="1">Belongs to the azoreductase type 1 family.</text>
</comment>
<proteinExistence type="inferred from homology"/>
<sequence>MVNILHIDSSPRAERSHSRELSKEFVSAWRAAHPEDAIAYRDLGHHPVPHVNEAWIAAAFSPPETHTPELAEAIRVSDELVDEFLAADRYVFGVPMYNFNIPSTFKAYIDQIVRINRTVSLDAQGFRGLVEGKKAVIITARGGDFSATSPAVAYDFQEPYLRTIFGFIGITDIQFINANSLNEGDARTQSLAEARAAIQDAIAQW</sequence>
<name>AZOR_NOSP7</name>
<evidence type="ECO:0000255" key="1">
    <source>
        <dbReference type="HAMAP-Rule" id="MF_01216"/>
    </source>
</evidence>
<accession>B2IX28</accession>
<dbReference type="EC" id="1.6.5.-" evidence="1"/>
<dbReference type="EC" id="1.7.1.17" evidence="1"/>
<dbReference type="EMBL" id="CP001037">
    <property type="protein sequence ID" value="ACC84563.1"/>
    <property type="molecule type" value="Genomic_DNA"/>
</dbReference>
<dbReference type="RefSeq" id="WP_012412502.1">
    <property type="nucleotide sequence ID" value="NC_010628.1"/>
</dbReference>
<dbReference type="SMR" id="B2IX28"/>
<dbReference type="STRING" id="63737.Npun_R6284"/>
<dbReference type="EnsemblBacteria" id="ACC84563">
    <property type="protein sequence ID" value="ACC84563"/>
    <property type="gene ID" value="Npun_R6284"/>
</dbReference>
<dbReference type="KEGG" id="npu:Npun_R6284"/>
<dbReference type="eggNOG" id="COG1182">
    <property type="taxonomic scope" value="Bacteria"/>
</dbReference>
<dbReference type="HOGENOM" id="CLU_088964_0_0_3"/>
<dbReference type="OrthoDB" id="9805013at2"/>
<dbReference type="PhylomeDB" id="B2IX28"/>
<dbReference type="Proteomes" id="UP000001191">
    <property type="component" value="Chromosome"/>
</dbReference>
<dbReference type="GO" id="GO:0009055">
    <property type="term" value="F:electron transfer activity"/>
    <property type="evidence" value="ECO:0007669"/>
    <property type="project" value="UniProtKB-UniRule"/>
</dbReference>
<dbReference type="GO" id="GO:0010181">
    <property type="term" value="F:FMN binding"/>
    <property type="evidence" value="ECO:0007669"/>
    <property type="project" value="UniProtKB-UniRule"/>
</dbReference>
<dbReference type="GO" id="GO:0016652">
    <property type="term" value="F:oxidoreductase activity, acting on NAD(P)H as acceptor"/>
    <property type="evidence" value="ECO:0007669"/>
    <property type="project" value="UniProtKB-UniRule"/>
</dbReference>
<dbReference type="GO" id="GO:0016655">
    <property type="term" value="F:oxidoreductase activity, acting on NAD(P)H, quinone or similar compound as acceptor"/>
    <property type="evidence" value="ECO:0007669"/>
    <property type="project" value="InterPro"/>
</dbReference>
<dbReference type="Gene3D" id="3.40.50.360">
    <property type="match status" value="1"/>
</dbReference>
<dbReference type="HAMAP" id="MF_01216">
    <property type="entry name" value="Azoreductase_type1"/>
    <property type="match status" value="1"/>
</dbReference>
<dbReference type="InterPro" id="IPR003680">
    <property type="entry name" value="Flavodoxin_fold"/>
</dbReference>
<dbReference type="InterPro" id="IPR029039">
    <property type="entry name" value="Flavoprotein-like_sf"/>
</dbReference>
<dbReference type="InterPro" id="IPR050104">
    <property type="entry name" value="FMN-dep_NADH:Q_OxRdtase_AzoR1"/>
</dbReference>
<dbReference type="InterPro" id="IPR023048">
    <property type="entry name" value="NADH:quinone_OxRdtase_FMN_depd"/>
</dbReference>
<dbReference type="PANTHER" id="PTHR43741">
    <property type="entry name" value="FMN-DEPENDENT NADH-AZOREDUCTASE 1"/>
    <property type="match status" value="1"/>
</dbReference>
<dbReference type="PANTHER" id="PTHR43741:SF4">
    <property type="entry name" value="FMN-DEPENDENT NADH:QUINONE OXIDOREDUCTASE"/>
    <property type="match status" value="1"/>
</dbReference>
<dbReference type="Pfam" id="PF02525">
    <property type="entry name" value="Flavodoxin_2"/>
    <property type="match status" value="1"/>
</dbReference>
<dbReference type="SUPFAM" id="SSF52218">
    <property type="entry name" value="Flavoproteins"/>
    <property type="match status" value="1"/>
</dbReference>
<gene>
    <name evidence="1" type="primary">azoR</name>
    <name type="ordered locus">Npun_R6284</name>
</gene>
<protein>
    <recommendedName>
        <fullName evidence="1">FMN-dependent NADH:quinone oxidoreductase</fullName>
        <ecNumber evidence="1">1.6.5.-</ecNumber>
    </recommendedName>
    <alternativeName>
        <fullName evidence="1">Azo-dye reductase</fullName>
    </alternativeName>
    <alternativeName>
        <fullName evidence="1">FMN-dependent NADH-azo compound oxidoreductase</fullName>
    </alternativeName>
    <alternativeName>
        <fullName evidence="1">FMN-dependent NADH-azoreductase</fullName>
        <ecNumber evidence="1">1.7.1.17</ecNumber>
    </alternativeName>
</protein>
<keyword id="KW-0285">Flavoprotein</keyword>
<keyword id="KW-0288">FMN</keyword>
<keyword id="KW-0520">NAD</keyword>
<keyword id="KW-0560">Oxidoreductase</keyword>
<keyword id="KW-1185">Reference proteome</keyword>
<organism>
    <name type="scientific">Nostoc punctiforme (strain ATCC 29133 / PCC 73102)</name>
    <dbReference type="NCBI Taxonomy" id="63737"/>
    <lineage>
        <taxon>Bacteria</taxon>
        <taxon>Bacillati</taxon>
        <taxon>Cyanobacteriota</taxon>
        <taxon>Cyanophyceae</taxon>
        <taxon>Nostocales</taxon>
        <taxon>Nostocaceae</taxon>
        <taxon>Nostoc</taxon>
    </lineage>
</organism>